<accession>A0AIR3</accession>
<name>ERA_LISW6</name>
<reference key="1">
    <citation type="journal article" date="2006" name="J. Bacteriol.">
        <title>Whole-genome sequence of Listeria welshimeri reveals common steps in genome reduction with Listeria innocua as compared to Listeria monocytogenes.</title>
        <authorList>
            <person name="Hain T."/>
            <person name="Steinweg C."/>
            <person name="Kuenne C.T."/>
            <person name="Billion A."/>
            <person name="Ghai R."/>
            <person name="Chatterjee S.S."/>
            <person name="Domann E."/>
            <person name="Kaerst U."/>
            <person name="Goesmann A."/>
            <person name="Bekel T."/>
            <person name="Bartels D."/>
            <person name="Kaiser O."/>
            <person name="Meyer F."/>
            <person name="Puehler A."/>
            <person name="Weisshaar B."/>
            <person name="Wehland J."/>
            <person name="Liang C."/>
            <person name="Dandekar T."/>
            <person name="Lampidis R."/>
            <person name="Kreft J."/>
            <person name="Goebel W."/>
            <person name="Chakraborty T."/>
        </authorList>
    </citation>
    <scope>NUCLEOTIDE SEQUENCE [LARGE SCALE GENOMIC DNA]</scope>
    <source>
        <strain>ATCC 35897 / DSM 20650 / CCUG 15529 / CIP 8149 / NCTC 11857 / SLCC 5334 / V8</strain>
    </source>
</reference>
<organism>
    <name type="scientific">Listeria welshimeri serovar 6b (strain ATCC 35897 / DSM 20650 / CCUG 15529 / CIP 8149 / NCTC 11857 / SLCC 5334 / V8)</name>
    <dbReference type="NCBI Taxonomy" id="386043"/>
    <lineage>
        <taxon>Bacteria</taxon>
        <taxon>Bacillati</taxon>
        <taxon>Bacillota</taxon>
        <taxon>Bacilli</taxon>
        <taxon>Bacillales</taxon>
        <taxon>Listeriaceae</taxon>
        <taxon>Listeria</taxon>
    </lineage>
</organism>
<proteinExistence type="inferred from homology"/>
<feature type="chain" id="PRO_1000079706" description="GTPase Era">
    <location>
        <begin position="1"/>
        <end position="301"/>
    </location>
</feature>
<feature type="domain" description="Era-type G" evidence="2">
    <location>
        <begin position="6"/>
        <end position="173"/>
    </location>
</feature>
<feature type="domain" description="KH type-2" evidence="1">
    <location>
        <begin position="204"/>
        <end position="282"/>
    </location>
</feature>
<feature type="region of interest" description="G1" evidence="2">
    <location>
        <begin position="14"/>
        <end position="21"/>
    </location>
</feature>
<feature type="region of interest" description="G2" evidence="2">
    <location>
        <begin position="40"/>
        <end position="44"/>
    </location>
</feature>
<feature type="region of interest" description="G3" evidence="2">
    <location>
        <begin position="61"/>
        <end position="64"/>
    </location>
</feature>
<feature type="region of interest" description="G4" evidence="2">
    <location>
        <begin position="123"/>
        <end position="126"/>
    </location>
</feature>
<feature type="region of interest" description="G5" evidence="2">
    <location>
        <begin position="152"/>
        <end position="154"/>
    </location>
</feature>
<feature type="binding site" evidence="1">
    <location>
        <begin position="14"/>
        <end position="21"/>
    </location>
    <ligand>
        <name>GTP</name>
        <dbReference type="ChEBI" id="CHEBI:37565"/>
    </ligand>
</feature>
<feature type="binding site" evidence="1">
    <location>
        <begin position="61"/>
        <end position="65"/>
    </location>
    <ligand>
        <name>GTP</name>
        <dbReference type="ChEBI" id="CHEBI:37565"/>
    </ligand>
</feature>
<feature type="binding site" evidence="1">
    <location>
        <begin position="123"/>
        <end position="126"/>
    </location>
    <ligand>
        <name>GTP</name>
        <dbReference type="ChEBI" id="CHEBI:37565"/>
    </ligand>
</feature>
<keyword id="KW-1003">Cell membrane</keyword>
<keyword id="KW-0963">Cytoplasm</keyword>
<keyword id="KW-0342">GTP-binding</keyword>
<keyword id="KW-0472">Membrane</keyword>
<keyword id="KW-0547">Nucleotide-binding</keyword>
<keyword id="KW-0690">Ribosome biogenesis</keyword>
<keyword id="KW-0694">RNA-binding</keyword>
<keyword id="KW-0699">rRNA-binding</keyword>
<sequence length="301" mass="34489">MSEPFKSGFVAIVGRPNVGKSTLLNHIIGQKIAIMSDKAQTTRNKVQGVYTTDESQIIFIDTPGIHKPKHKLGDFMVKIALNTFQEVDLIYFVIDASTGFGRGDEFIIEKLKNVQTPVFLLINKIDLISPEDLFKLIEQYRELLDFEEIIPISALQGNNVPNLLEQTNANLEIGPMYYPKDQITDHPERFIISELIREQVLQLTREEVPHSVAVVIEGIEKNPKTEKLTINATIIVERSTQKGIIIGKQGQMLKQIGMRARKEIESLLGSKVFLEIWVKVQKNWRDKEHYLHDYGFDREEY</sequence>
<evidence type="ECO:0000255" key="1">
    <source>
        <dbReference type="HAMAP-Rule" id="MF_00367"/>
    </source>
</evidence>
<evidence type="ECO:0000255" key="2">
    <source>
        <dbReference type="PROSITE-ProRule" id="PRU01050"/>
    </source>
</evidence>
<protein>
    <recommendedName>
        <fullName evidence="1">GTPase Era</fullName>
    </recommendedName>
</protein>
<gene>
    <name evidence="1" type="primary">era</name>
    <name type="ordered locus">lwe1477</name>
</gene>
<comment type="function">
    <text evidence="1">An essential GTPase that binds both GDP and GTP, with rapid nucleotide exchange. Plays a role in 16S rRNA processing and 30S ribosomal subunit biogenesis and possibly also in cell cycle regulation and energy metabolism.</text>
</comment>
<comment type="subunit">
    <text evidence="1">Monomer.</text>
</comment>
<comment type="subcellular location">
    <subcellularLocation>
        <location>Cytoplasm</location>
    </subcellularLocation>
    <subcellularLocation>
        <location evidence="1">Cell membrane</location>
        <topology evidence="1">Peripheral membrane protein</topology>
    </subcellularLocation>
</comment>
<comment type="similarity">
    <text evidence="1 2">Belongs to the TRAFAC class TrmE-Era-EngA-EngB-Septin-like GTPase superfamily. Era GTPase family.</text>
</comment>
<dbReference type="EMBL" id="AM263198">
    <property type="protein sequence ID" value="CAK20895.1"/>
    <property type="molecule type" value="Genomic_DNA"/>
</dbReference>
<dbReference type="RefSeq" id="WP_011702270.1">
    <property type="nucleotide sequence ID" value="NC_008555.1"/>
</dbReference>
<dbReference type="SMR" id="A0AIR3"/>
<dbReference type="STRING" id="386043.lwe1477"/>
<dbReference type="GeneID" id="61189353"/>
<dbReference type="KEGG" id="lwe:lwe1477"/>
<dbReference type="eggNOG" id="COG1159">
    <property type="taxonomic scope" value="Bacteria"/>
</dbReference>
<dbReference type="HOGENOM" id="CLU_038009_1_0_9"/>
<dbReference type="OrthoDB" id="9805918at2"/>
<dbReference type="Proteomes" id="UP000000779">
    <property type="component" value="Chromosome"/>
</dbReference>
<dbReference type="GO" id="GO:0005829">
    <property type="term" value="C:cytosol"/>
    <property type="evidence" value="ECO:0007669"/>
    <property type="project" value="TreeGrafter"/>
</dbReference>
<dbReference type="GO" id="GO:0005886">
    <property type="term" value="C:plasma membrane"/>
    <property type="evidence" value="ECO:0007669"/>
    <property type="project" value="UniProtKB-SubCell"/>
</dbReference>
<dbReference type="GO" id="GO:0005525">
    <property type="term" value="F:GTP binding"/>
    <property type="evidence" value="ECO:0007669"/>
    <property type="project" value="UniProtKB-UniRule"/>
</dbReference>
<dbReference type="GO" id="GO:0003924">
    <property type="term" value="F:GTPase activity"/>
    <property type="evidence" value="ECO:0007669"/>
    <property type="project" value="UniProtKB-UniRule"/>
</dbReference>
<dbReference type="GO" id="GO:0043024">
    <property type="term" value="F:ribosomal small subunit binding"/>
    <property type="evidence" value="ECO:0007669"/>
    <property type="project" value="TreeGrafter"/>
</dbReference>
<dbReference type="GO" id="GO:0070181">
    <property type="term" value="F:small ribosomal subunit rRNA binding"/>
    <property type="evidence" value="ECO:0007669"/>
    <property type="project" value="UniProtKB-UniRule"/>
</dbReference>
<dbReference type="GO" id="GO:0000028">
    <property type="term" value="P:ribosomal small subunit assembly"/>
    <property type="evidence" value="ECO:0007669"/>
    <property type="project" value="TreeGrafter"/>
</dbReference>
<dbReference type="CDD" id="cd04163">
    <property type="entry name" value="Era"/>
    <property type="match status" value="1"/>
</dbReference>
<dbReference type="CDD" id="cd22534">
    <property type="entry name" value="KH-II_Era"/>
    <property type="match status" value="1"/>
</dbReference>
<dbReference type="FunFam" id="3.30.300.20:FF:000003">
    <property type="entry name" value="GTPase Era"/>
    <property type="match status" value="1"/>
</dbReference>
<dbReference type="FunFam" id="3.40.50.300:FF:000094">
    <property type="entry name" value="GTPase Era"/>
    <property type="match status" value="1"/>
</dbReference>
<dbReference type="Gene3D" id="3.30.300.20">
    <property type="match status" value="1"/>
</dbReference>
<dbReference type="Gene3D" id="3.40.50.300">
    <property type="entry name" value="P-loop containing nucleotide triphosphate hydrolases"/>
    <property type="match status" value="1"/>
</dbReference>
<dbReference type="HAMAP" id="MF_00367">
    <property type="entry name" value="GTPase_Era"/>
    <property type="match status" value="1"/>
</dbReference>
<dbReference type="InterPro" id="IPR030388">
    <property type="entry name" value="G_ERA_dom"/>
</dbReference>
<dbReference type="InterPro" id="IPR006073">
    <property type="entry name" value="GTP-bd"/>
</dbReference>
<dbReference type="InterPro" id="IPR005662">
    <property type="entry name" value="GTPase_Era-like"/>
</dbReference>
<dbReference type="InterPro" id="IPR015946">
    <property type="entry name" value="KH_dom-like_a/b"/>
</dbReference>
<dbReference type="InterPro" id="IPR004044">
    <property type="entry name" value="KH_dom_type_2"/>
</dbReference>
<dbReference type="InterPro" id="IPR009019">
    <property type="entry name" value="KH_sf_prok-type"/>
</dbReference>
<dbReference type="InterPro" id="IPR027417">
    <property type="entry name" value="P-loop_NTPase"/>
</dbReference>
<dbReference type="InterPro" id="IPR005225">
    <property type="entry name" value="Small_GTP-bd"/>
</dbReference>
<dbReference type="NCBIfam" id="TIGR00436">
    <property type="entry name" value="era"/>
    <property type="match status" value="1"/>
</dbReference>
<dbReference type="NCBIfam" id="NF000908">
    <property type="entry name" value="PRK00089.1"/>
    <property type="match status" value="1"/>
</dbReference>
<dbReference type="NCBIfam" id="TIGR00231">
    <property type="entry name" value="small_GTP"/>
    <property type="match status" value="1"/>
</dbReference>
<dbReference type="PANTHER" id="PTHR42698">
    <property type="entry name" value="GTPASE ERA"/>
    <property type="match status" value="1"/>
</dbReference>
<dbReference type="PANTHER" id="PTHR42698:SF1">
    <property type="entry name" value="GTPASE ERA, MITOCHONDRIAL"/>
    <property type="match status" value="1"/>
</dbReference>
<dbReference type="Pfam" id="PF07650">
    <property type="entry name" value="KH_2"/>
    <property type="match status" value="1"/>
</dbReference>
<dbReference type="Pfam" id="PF01926">
    <property type="entry name" value="MMR_HSR1"/>
    <property type="match status" value="1"/>
</dbReference>
<dbReference type="PRINTS" id="PR00326">
    <property type="entry name" value="GTP1OBG"/>
</dbReference>
<dbReference type="SUPFAM" id="SSF52540">
    <property type="entry name" value="P-loop containing nucleoside triphosphate hydrolases"/>
    <property type="match status" value="1"/>
</dbReference>
<dbReference type="SUPFAM" id="SSF54814">
    <property type="entry name" value="Prokaryotic type KH domain (KH-domain type II)"/>
    <property type="match status" value="1"/>
</dbReference>
<dbReference type="PROSITE" id="PS51713">
    <property type="entry name" value="G_ERA"/>
    <property type="match status" value="1"/>
</dbReference>
<dbReference type="PROSITE" id="PS50823">
    <property type="entry name" value="KH_TYPE_2"/>
    <property type="match status" value="1"/>
</dbReference>